<accession>A0A254TZW7</accession>
<proteinExistence type="inferred from homology"/>
<evidence type="ECO:0000255" key="1"/>
<evidence type="ECO:0000255" key="2">
    <source>
        <dbReference type="PROSITE-ProRule" id="PRU00498"/>
    </source>
</evidence>
<evidence type="ECO:0000256" key="3">
    <source>
        <dbReference type="SAM" id="MobiDB-lite"/>
    </source>
</evidence>
<evidence type="ECO:0000269" key="4">
    <source>
    </source>
</evidence>
<evidence type="ECO:0000303" key="5">
    <source>
    </source>
</evidence>
<evidence type="ECO:0000305" key="6"/>
<evidence type="ECO:0000305" key="7">
    <source>
    </source>
</evidence>
<evidence type="ECO:0000312" key="8">
    <source>
        <dbReference type="EMBL" id="SPB48923.1"/>
    </source>
</evidence>
<evidence type="ECO:0000312" key="9">
    <source>
        <dbReference type="EMBL" id="TPR10838.1"/>
    </source>
</evidence>
<evidence type="ECO:0000312" key="10">
    <source>
        <dbReference type="Proteomes" id="UP000197666"/>
    </source>
</evidence>
<protein>
    <recommendedName>
        <fullName evidence="5">Citrate exporter 1</fullName>
    </recommendedName>
</protein>
<name>CEX1_ASPNG</name>
<dbReference type="EMBL" id="OGUI01000010">
    <property type="protein sequence ID" value="SPB48923.1"/>
    <property type="molecule type" value="Genomic_DNA"/>
</dbReference>
<dbReference type="EMBL" id="NKJJ02000012">
    <property type="protein sequence ID" value="TPR10838.1"/>
    <property type="molecule type" value="Genomic_DNA"/>
</dbReference>
<dbReference type="SMR" id="A0A254TZW7"/>
<dbReference type="GlyCosmos" id="A0A254TZW7">
    <property type="glycosylation" value="2 sites, No reported glycans"/>
</dbReference>
<dbReference type="VEuPathDB" id="FungiDB:An17g01710"/>
<dbReference type="VEuPathDB" id="FungiDB:ASPNIDRAFT2_1165828"/>
<dbReference type="VEuPathDB" id="FungiDB:ATCC64974_65440"/>
<dbReference type="VEuPathDB" id="FungiDB:M747DRAFT_295654"/>
<dbReference type="eggNOG" id="KOG0255">
    <property type="taxonomic scope" value="Eukaryota"/>
</dbReference>
<dbReference type="OrthoDB" id="440553at2759"/>
<dbReference type="Proteomes" id="UP000197666">
    <property type="component" value="Unassembled WGS sequence"/>
</dbReference>
<dbReference type="GO" id="GO:0005886">
    <property type="term" value="C:plasma membrane"/>
    <property type="evidence" value="ECO:0000305"/>
    <property type="project" value="UniProtKB"/>
</dbReference>
<dbReference type="GO" id="GO:0015137">
    <property type="term" value="F:citrate transmembrane transporter activity"/>
    <property type="evidence" value="ECO:0000314"/>
    <property type="project" value="UniProtKB"/>
</dbReference>
<dbReference type="GO" id="GO:0015746">
    <property type="term" value="P:citrate transport"/>
    <property type="evidence" value="ECO:0000314"/>
    <property type="project" value="UniProtKB"/>
</dbReference>
<dbReference type="GO" id="GO:0140115">
    <property type="term" value="P:export across plasma membrane"/>
    <property type="evidence" value="ECO:0000314"/>
    <property type="project" value="UniProtKB"/>
</dbReference>
<dbReference type="FunFam" id="1.20.1250.20:FF:000172">
    <property type="entry name" value="MFS multidrug resistance transporter"/>
    <property type="match status" value="1"/>
</dbReference>
<dbReference type="FunFam" id="1.20.1720.10:FF:000009">
    <property type="entry name" value="MFS multidrug transporter"/>
    <property type="match status" value="1"/>
</dbReference>
<dbReference type="Gene3D" id="1.20.1250.20">
    <property type="entry name" value="MFS general substrate transporter like domains"/>
    <property type="match status" value="1"/>
</dbReference>
<dbReference type="InterPro" id="IPR011701">
    <property type="entry name" value="MFS"/>
</dbReference>
<dbReference type="InterPro" id="IPR020846">
    <property type="entry name" value="MFS_dom"/>
</dbReference>
<dbReference type="InterPro" id="IPR036259">
    <property type="entry name" value="MFS_trans_sf"/>
</dbReference>
<dbReference type="PANTHER" id="PTHR23502">
    <property type="entry name" value="MAJOR FACILITATOR SUPERFAMILY"/>
    <property type="match status" value="1"/>
</dbReference>
<dbReference type="PANTHER" id="PTHR23502:SF26">
    <property type="entry name" value="MAJOR FACILITATOR SUPERFAMILY (MFS) PROFILE DOMAIN-CONTAINING PROTEIN"/>
    <property type="match status" value="1"/>
</dbReference>
<dbReference type="Pfam" id="PF07690">
    <property type="entry name" value="MFS_1"/>
    <property type="match status" value="1"/>
</dbReference>
<dbReference type="PRINTS" id="PR01036">
    <property type="entry name" value="TCRTETB"/>
</dbReference>
<dbReference type="SUPFAM" id="SSF103473">
    <property type="entry name" value="MFS general substrate transporter"/>
    <property type="match status" value="1"/>
</dbReference>
<dbReference type="PROSITE" id="PS50850">
    <property type="entry name" value="MFS"/>
    <property type="match status" value="1"/>
</dbReference>
<sequence length="524" mass="56776">MSSTTSSSRSDLEKVPVPQVTPRDSDSDKGSLSPEPSTLEAQSSEKPPHHIFTRSRKLQMVCIVSLAAIFSPLSSNIYFPALDDVSKSLNISMSLATLTITVYMIVQGLAPSFWGSMSDATGRRPVFIGTFIVYLVANIALAESKNYGELMAFRALQAAGSAATISIGAGVIGDITNSEERGSLVGIFGGVRMLGQGIGPVFGGIFTQYLGYRSIFWFLTIAGGVSLLSILVLLPETLRPIAGNGTVKLNGIHKPFIYTITGQTGVVEGAQPEAKKTKTSWKSVFAPLTFLVEKDVFITLFFGSIVYTVWSMVTSSTTDLFSEVYGLSSLDIGLTFLGNGFGCMSGSYLVGYLMDYNHRLTEREYCEKHGYPAGTRVNLKSHPDFPIEVARMRNTWWVIAIFIVTVALYGVSLRTHLAVPIILQYFIAFCSTGLFTINSALVIDLYPGASASATAVNNLMRCLLGAGGVAIVQPILDALKPDYTFLLLAGITLVMTPLLYVEDRWGPGWRHARERRLKAKANGN</sequence>
<gene>
    <name evidence="6" type="primary">cex1</name>
    <name evidence="5" type="synonym">cexA</name>
    <name evidence="8" type="ORF">ATCC64974_65440</name>
    <name evidence="9" type="ORF">CAN33_0036340</name>
</gene>
<comment type="function">
    <text evidence="4">Transmembrane transporter that exports citrate across the cell membrane.</text>
</comment>
<comment type="catalytic activity">
    <reaction evidence="7">
        <text>citrate(in) = citrate(out)</text>
        <dbReference type="Rhea" id="RHEA:33183"/>
        <dbReference type="ChEBI" id="CHEBI:16947"/>
    </reaction>
</comment>
<comment type="subcellular location">
    <subcellularLocation>
        <location evidence="7">Cell membrane</location>
        <topology evidence="1">Multi-pass membrane protein</topology>
    </subcellularLocation>
</comment>
<comment type="similarity">
    <text evidence="6">Belongs to the major facilitator superfamily.</text>
</comment>
<reference key="1">
    <citation type="journal article" date="2018" name="Front. Microbiol.">
        <title>Forward genetics by genome sequencing uncovers the central role of the Aspergillus niger goxB locus in hydrogen peroxide induced glucose oxidase expression.</title>
        <authorList>
            <person name="Laothanachareon T."/>
            <person name="Tamayo-Ramos J.A."/>
            <person name="Nijsse B."/>
            <person name="Schaap P.J."/>
        </authorList>
    </citation>
    <scope>NUCLEOTIDE SEQUENCE [LARGE SCALE GENOMIC DNA]</scope>
    <source>
        <strain>ATCC 64974 / FGSC A733 / N402</strain>
    </source>
</reference>
<reference evidence="10" key="2">
    <citation type="submission" date="2018-10" db="EMBL/GenBank/DDBJ databases">
        <title>FDA dAtabase for Regulatory Grade micrObial Sequences (FDA-ARGOS): Supporting development and validation of Infectious Disease Dx tests.</title>
        <authorList>
            <person name="Kerrigan L."/>
            <person name="Tallon L."/>
            <person name="Sadzewicz L."/>
            <person name="Sengamalay N."/>
            <person name="Ott S."/>
            <person name="Godinez A."/>
            <person name="Nagaraj S."/>
            <person name="Vavikolanu K."/>
            <person name="Nadendla S."/>
            <person name="George J."/>
            <person name="Sichtig H."/>
        </authorList>
    </citation>
    <scope>NUCLEOTIDE SEQUENCE [LARGE SCALE GENOMIC DNA]</scope>
    <source>
        <strain evidence="10">FDAARGOS_311</strain>
    </source>
</reference>
<reference evidence="6" key="3">
    <citation type="journal article" date="2019" name="FEMS Microbiol. Lett.">
        <title>Aspergillus niger citrate exporter revealed by comparison of two alternative citrate producing conditions.</title>
        <authorList>
            <person name="Odoni D.I."/>
            <person name="Vazquez-Vilar M."/>
            <person name="van Gaal M.P."/>
            <person name="Schonewille T."/>
            <person name="Martins Dos Santos V.A.P."/>
            <person name="Tamayo-Ramos J.A."/>
            <person name="Suarez-Diez M."/>
            <person name="Schaap P.J."/>
        </authorList>
    </citation>
    <scope>FUNCTION</scope>
    <scope>SUBCELLULAR LOCATION</scope>
    <source>
        <strain evidence="5">ATCC 64974 / FGSC A733 / N402</strain>
    </source>
</reference>
<organism>
    <name type="scientific">Aspergillus niger</name>
    <dbReference type="NCBI Taxonomy" id="5061"/>
    <lineage>
        <taxon>Eukaryota</taxon>
        <taxon>Fungi</taxon>
        <taxon>Dikarya</taxon>
        <taxon>Ascomycota</taxon>
        <taxon>Pezizomycotina</taxon>
        <taxon>Eurotiomycetes</taxon>
        <taxon>Eurotiomycetidae</taxon>
        <taxon>Eurotiales</taxon>
        <taxon>Aspergillaceae</taxon>
        <taxon>Aspergillus</taxon>
        <taxon>Aspergillus subgen. Circumdati</taxon>
    </lineage>
</organism>
<keyword id="KW-1003">Cell membrane</keyword>
<keyword id="KW-0325">Glycoprotein</keyword>
<keyword id="KW-0472">Membrane</keyword>
<keyword id="KW-0812">Transmembrane</keyword>
<keyword id="KW-1133">Transmembrane helix</keyword>
<keyword id="KW-0813">Transport</keyword>
<feature type="chain" id="PRO_0000452023" description="Citrate exporter 1">
    <location>
        <begin position="1"/>
        <end position="524"/>
    </location>
</feature>
<feature type="transmembrane region" description="Helical" evidence="1">
    <location>
        <begin position="60"/>
        <end position="80"/>
    </location>
</feature>
<feature type="transmembrane region" description="Helical" evidence="1">
    <location>
        <begin position="95"/>
        <end position="115"/>
    </location>
</feature>
<feature type="transmembrane region" description="Helical" evidence="1">
    <location>
        <begin position="125"/>
        <end position="145"/>
    </location>
</feature>
<feature type="transmembrane region" description="Helical" evidence="1">
    <location>
        <begin position="155"/>
        <end position="175"/>
    </location>
</feature>
<feature type="transmembrane region" description="Helical" evidence="1">
    <location>
        <begin position="186"/>
        <end position="206"/>
    </location>
</feature>
<feature type="transmembrane region" description="Helical" evidence="1">
    <location>
        <begin position="215"/>
        <end position="235"/>
    </location>
</feature>
<feature type="transmembrane region" description="Helical" evidence="1">
    <location>
        <begin position="296"/>
        <end position="316"/>
    </location>
</feature>
<feature type="transmembrane region" description="Helical" evidence="1">
    <location>
        <begin position="332"/>
        <end position="352"/>
    </location>
</feature>
<feature type="transmembrane region" description="Helical" evidence="1">
    <location>
        <begin position="395"/>
        <end position="415"/>
    </location>
</feature>
<feature type="transmembrane region" description="Helical" evidence="1">
    <location>
        <begin position="417"/>
        <end position="437"/>
    </location>
</feature>
<feature type="transmembrane region" description="Helical" evidence="1">
    <location>
        <begin position="459"/>
        <end position="479"/>
    </location>
</feature>
<feature type="transmembrane region" description="Helical" evidence="1">
    <location>
        <begin position="481"/>
        <end position="501"/>
    </location>
</feature>
<feature type="region of interest" description="Disordered" evidence="3">
    <location>
        <begin position="1"/>
        <end position="49"/>
    </location>
</feature>
<feature type="compositionally biased region" description="Polar residues" evidence="3">
    <location>
        <begin position="34"/>
        <end position="45"/>
    </location>
</feature>
<feature type="glycosylation site" description="N-linked (GlcNAc...) asparagine" evidence="2">
    <location>
        <position position="90"/>
    </location>
</feature>
<feature type="glycosylation site" description="N-linked (GlcNAc...) asparagine" evidence="2">
    <location>
        <position position="244"/>
    </location>
</feature>